<name>RECA_BORBZ</name>
<comment type="function">
    <text evidence="1">Can catalyze the hydrolysis of ATP in the presence of single-stranded DNA, the ATP-dependent uptake of single-stranded DNA by duplex DNA, and the ATP-dependent hybridization of homologous single-stranded DNAs. It interacts with LexA causing its activation and leading to its autocatalytic cleavage.</text>
</comment>
<comment type="subcellular location">
    <subcellularLocation>
        <location evidence="1">Cytoplasm</location>
    </subcellularLocation>
</comment>
<comment type="similarity">
    <text evidence="1">Belongs to the RecA family.</text>
</comment>
<organism>
    <name type="scientific">Borreliella burgdorferi (strain ZS7)</name>
    <name type="common">Borrelia burgdorferi</name>
    <dbReference type="NCBI Taxonomy" id="445985"/>
    <lineage>
        <taxon>Bacteria</taxon>
        <taxon>Pseudomonadati</taxon>
        <taxon>Spirochaetota</taxon>
        <taxon>Spirochaetia</taxon>
        <taxon>Spirochaetales</taxon>
        <taxon>Borreliaceae</taxon>
        <taxon>Borreliella</taxon>
    </lineage>
</organism>
<gene>
    <name evidence="1" type="primary">recA</name>
    <name type="ordered locus">BbuZS7_0131</name>
</gene>
<keyword id="KW-0067">ATP-binding</keyword>
<keyword id="KW-0963">Cytoplasm</keyword>
<keyword id="KW-0227">DNA damage</keyword>
<keyword id="KW-0233">DNA recombination</keyword>
<keyword id="KW-0234">DNA repair</keyword>
<keyword id="KW-0238">DNA-binding</keyword>
<keyword id="KW-0547">Nucleotide-binding</keyword>
<keyword id="KW-0742">SOS response</keyword>
<accession>B7J164</accession>
<evidence type="ECO:0000255" key="1">
    <source>
        <dbReference type="HAMAP-Rule" id="MF_00268"/>
    </source>
</evidence>
<feature type="chain" id="PRO_1000193292" description="Protein RecA">
    <location>
        <begin position="1"/>
        <end position="365"/>
    </location>
</feature>
<feature type="binding site" evidence="1">
    <location>
        <begin position="81"/>
        <end position="88"/>
    </location>
    <ligand>
        <name>ATP</name>
        <dbReference type="ChEBI" id="CHEBI:30616"/>
    </ligand>
</feature>
<protein>
    <recommendedName>
        <fullName evidence="1">Protein RecA</fullName>
    </recommendedName>
    <alternativeName>
        <fullName evidence="1">Recombinase A</fullName>
    </alternativeName>
</protein>
<dbReference type="EMBL" id="CP001205">
    <property type="protein sequence ID" value="ACK74417.1"/>
    <property type="molecule type" value="Genomic_DNA"/>
</dbReference>
<dbReference type="RefSeq" id="WP_002658212.1">
    <property type="nucleotide sequence ID" value="NC_011728.1"/>
</dbReference>
<dbReference type="SMR" id="B7J164"/>
<dbReference type="GeneID" id="56568087"/>
<dbReference type="KEGG" id="bbz:BbuZS7_0131"/>
<dbReference type="HOGENOM" id="CLU_040469_3_2_12"/>
<dbReference type="Proteomes" id="UP000006901">
    <property type="component" value="Chromosome"/>
</dbReference>
<dbReference type="GO" id="GO:0005829">
    <property type="term" value="C:cytosol"/>
    <property type="evidence" value="ECO:0007669"/>
    <property type="project" value="TreeGrafter"/>
</dbReference>
<dbReference type="GO" id="GO:0005524">
    <property type="term" value="F:ATP binding"/>
    <property type="evidence" value="ECO:0007669"/>
    <property type="project" value="UniProtKB-UniRule"/>
</dbReference>
<dbReference type="GO" id="GO:0016887">
    <property type="term" value="F:ATP hydrolysis activity"/>
    <property type="evidence" value="ECO:0007669"/>
    <property type="project" value="InterPro"/>
</dbReference>
<dbReference type="GO" id="GO:0140664">
    <property type="term" value="F:ATP-dependent DNA damage sensor activity"/>
    <property type="evidence" value="ECO:0007669"/>
    <property type="project" value="InterPro"/>
</dbReference>
<dbReference type="GO" id="GO:0003684">
    <property type="term" value="F:damaged DNA binding"/>
    <property type="evidence" value="ECO:0007669"/>
    <property type="project" value="UniProtKB-UniRule"/>
</dbReference>
<dbReference type="GO" id="GO:0003697">
    <property type="term" value="F:single-stranded DNA binding"/>
    <property type="evidence" value="ECO:0007669"/>
    <property type="project" value="UniProtKB-UniRule"/>
</dbReference>
<dbReference type="GO" id="GO:0006310">
    <property type="term" value="P:DNA recombination"/>
    <property type="evidence" value="ECO:0007669"/>
    <property type="project" value="UniProtKB-UniRule"/>
</dbReference>
<dbReference type="GO" id="GO:0006281">
    <property type="term" value="P:DNA repair"/>
    <property type="evidence" value="ECO:0007669"/>
    <property type="project" value="UniProtKB-UniRule"/>
</dbReference>
<dbReference type="GO" id="GO:0009432">
    <property type="term" value="P:SOS response"/>
    <property type="evidence" value="ECO:0007669"/>
    <property type="project" value="UniProtKB-UniRule"/>
</dbReference>
<dbReference type="CDD" id="cd00983">
    <property type="entry name" value="RecA"/>
    <property type="match status" value="1"/>
</dbReference>
<dbReference type="FunFam" id="3.40.50.300:FF:000087">
    <property type="entry name" value="Recombinase RecA"/>
    <property type="match status" value="1"/>
</dbReference>
<dbReference type="Gene3D" id="3.40.50.300">
    <property type="entry name" value="P-loop containing nucleotide triphosphate hydrolases"/>
    <property type="match status" value="1"/>
</dbReference>
<dbReference type="HAMAP" id="MF_00268">
    <property type="entry name" value="RecA"/>
    <property type="match status" value="1"/>
</dbReference>
<dbReference type="InterPro" id="IPR003593">
    <property type="entry name" value="AAA+_ATPase"/>
</dbReference>
<dbReference type="InterPro" id="IPR013765">
    <property type="entry name" value="DNA_recomb/repair_RecA"/>
</dbReference>
<dbReference type="InterPro" id="IPR020584">
    <property type="entry name" value="DNA_recomb/repair_RecA_CS"/>
</dbReference>
<dbReference type="InterPro" id="IPR027417">
    <property type="entry name" value="P-loop_NTPase"/>
</dbReference>
<dbReference type="InterPro" id="IPR049261">
    <property type="entry name" value="RecA-like_C"/>
</dbReference>
<dbReference type="InterPro" id="IPR049428">
    <property type="entry name" value="RecA-like_N"/>
</dbReference>
<dbReference type="InterPro" id="IPR020588">
    <property type="entry name" value="RecA_ATP-bd"/>
</dbReference>
<dbReference type="InterPro" id="IPR023400">
    <property type="entry name" value="RecA_C_sf"/>
</dbReference>
<dbReference type="InterPro" id="IPR020587">
    <property type="entry name" value="RecA_monomer-monomer_interface"/>
</dbReference>
<dbReference type="NCBIfam" id="TIGR02012">
    <property type="entry name" value="tigrfam_recA"/>
    <property type="match status" value="1"/>
</dbReference>
<dbReference type="PANTHER" id="PTHR45900:SF1">
    <property type="entry name" value="MITOCHONDRIAL DNA REPAIR PROTEIN RECA HOMOLOG-RELATED"/>
    <property type="match status" value="1"/>
</dbReference>
<dbReference type="PANTHER" id="PTHR45900">
    <property type="entry name" value="RECA"/>
    <property type="match status" value="1"/>
</dbReference>
<dbReference type="Pfam" id="PF00154">
    <property type="entry name" value="RecA"/>
    <property type="match status" value="1"/>
</dbReference>
<dbReference type="Pfam" id="PF21096">
    <property type="entry name" value="RecA_C"/>
    <property type="match status" value="1"/>
</dbReference>
<dbReference type="PRINTS" id="PR00142">
    <property type="entry name" value="RECA"/>
</dbReference>
<dbReference type="SMART" id="SM00382">
    <property type="entry name" value="AAA"/>
    <property type="match status" value="1"/>
</dbReference>
<dbReference type="SUPFAM" id="SSF52540">
    <property type="entry name" value="P-loop containing nucleoside triphosphate hydrolases"/>
    <property type="match status" value="1"/>
</dbReference>
<dbReference type="SUPFAM" id="SSF54752">
    <property type="entry name" value="RecA protein, C-terminal domain"/>
    <property type="match status" value="1"/>
</dbReference>
<dbReference type="PROSITE" id="PS00321">
    <property type="entry name" value="RECA_1"/>
    <property type="match status" value="1"/>
</dbReference>
<dbReference type="PROSITE" id="PS50162">
    <property type="entry name" value="RECA_2"/>
    <property type="match status" value="1"/>
</dbReference>
<dbReference type="PROSITE" id="PS50163">
    <property type="entry name" value="RECA_3"/>
    <property type="match status" value="1"/>
</dbReference>
<sequence length="365" mass="39949">MSKLKEKREKAVVGIERASKEEAIELARVQIEKAFGKGSLIKMGESPVGQGIKSMSSGSIVLDEALGIGGYPRGRIIEIFGPESSGKTTLTLQAIAEVQKEGGIAAFIDAEHALDPVYAKALGVNVAELWLSQPDTGEQALEIAEHLIRSGGVDLIVVDSVAALTPKLEIDGEMGDSQIGLQARLMSKALRKITGILSKSNTCIMFINQIRMRIGVMFGNPETTTGGNALKFYSSLRLEVRKIEQVTRSGSSDDVIGNKIRVKIVKNKVAPPFRKVELIIYFGKGISREAGILDAAIKHNLIQKTGSWYSLGDNKLGQGRESVIEYLSKEVELANNLDKRLRKIIFNNFDQENDNFIEFKEDESE</sequence>
<proteinExistence type="inferred from homology"/>
<reference key="1">
    <citation type="journal article" date="2011" name="J. Bacteriol.">
        <title>Whole-genome sequences of thirteen isolates of Borrelia burgdorferi.</title>
        <authorList>
            <person name="Schutzer S.E."/>
            <person name="Fraser-Liggett C.M."/>
            <person name="Casjens S.R."/>
            <person name="Qiu W.G."/>
            <person name="Dunn J.J."/>
            <person name="Mongodin E.F."/>
            <person name="Luft B.J."/>
        </authorList>
    </citation>
    <scope>NUCLEOTIDE SEQUENCE [LARGE SCALE GENOMIC DNA]</scope>
    <source>
        <strain>ZS7</strain>
    </source>
</reference>